<dbReference type="EC" id="2.4.2.7" evidence="1"/>
<dbReference type="EMBL" id="CP000744">
    <property type="protein sequence ID" value="ABR83050.1"/>
    <property type="molecule type" value="Genomic_DNA"/>
</dbReference>
<dbReference type="RefSeq" id="WP_003153685.1">
    <property type="nucleotide sequence ID" value="NC_009656.1"/>
</dbReference>
<dbReference type="SMR" id="A6V7V8"/>
<dbReference type="GeneID" id="77221839"/>
<dbReference type="KEGG" id="pap:PSPA7_3789"/>
<dbReference type="HOGENOM" id="CLU_063339_3_0_6"/>
<dbReference type="UniPathway" id="UPA00588">
    <property type="reaction ID" value="UER00646"/>
</dbReference>
<dbReference type="Proteomes" id="UP000001582">
    <property type="component" value="Chromosome"/>
</dbReference>
<dbReference type="GO" id="GO:0005829">
    <property type="term" value="C:cytosol"/>
    <property type="evidence" value="ECO:0007669"/>
    <property type="project" value="TreeGrafter"/>
</dbReference>
<dbReference type="GO" id="GO:0003999">
    <property type="term" value="F:adenine phosphoribosyltransferase activity"/>
    <property type="evidence" value="ECO:0007669"/>
    <property type="project" value="UniProtKB-UniRule"/>
</dbReference>
<dbReference type="GO" id="GO:0006168">
    <property type="term" value="P:adenine salvage"/>
    <property type="evidence" value="ECO:0007669"/>
    <property type="project" value="InterPro"/>
</dbReference>
<dbReference type="GO" id="GO:0044209">
    <property type="term" value="P:AMP salvage"/>
    <property type="evidence" value="ECO:0007669"/>
    <property type="project" value="UniProtKB-UniRule"/>
</dbReference>
<dbReference type="GO" id="GO:0006166">
    <property type="term" value="P:purine ribonucleoside salvage"/>
    <property type="evidence" value="ECO:0007669"/>
    <property type="project" value="UniProtKB-KW"/>
</dbReference>
<dbReference type="CDD" id="cd06223">
    <property type="entry name" value="PRTases_typeI"/>
    <property type="match status" value="1"/>
</dbReference>
<dbReference type="FunFam" id="3.40.50.2020:FF:000021">
    <property type="entry name" value="Adenine phosphoribosyltransferase"/>
    <property type="match status" value="1"/>
</dbReference>
<dbReference type="Gene3D" id="3.40.50.2020">
    <property type="match status" value="1"/>
</dbReference>
<dbReference type="HAMAP" id="MF_00004">
    <property type="entry name" value="Aden_phosphoribosyltr"/>
    <property type="match status" value="1"/>
</dbReference>
<dbReference type="InterPro" id="IPR005764">
    <property type="entry name" value="Ade_phspho_trans"/>
</dbReference>
<dbReference type="InterPro" id="IPR050120">
    <property type="entry name" value="Adenine_PRTase"/>
</dbReference>
<dbReference type="InterPro" id="IPR000836">
    <property type="entry name" value="PRibTrfase_dom"/>
</dbReference>
<dbReference type="InterPro" id="IPR029057">
    <property type="entry name" value="PRTase-like"/>
</dbReference>
<dbReference type="NCBIfam" id="TIGR01090">
    <property type="entry name" value="apt"/>
    <property type="match status" value="1"/>
</dbReference>
<dbReference type="NCBIfam" id="NF002634">
    <property type="entry name" value="PRK02304.1-3"/>
    <property type="match status" value="1"/>
</dbReference>
<dbReference type="NCBIfam" id="NF002636">
    <property type="entry name" value="PRK02304.1-5"/>
    <property type="match status" value="1"/>
</dbReference>
<dbReference type="PANTHER" id="PTHR11776">
    <property type="entry name" value="ADENINE PHOSPHORIBOSYLTRANSFERASE"/>
    <property type="match status" value="1"/>
</dbReference>
<dbReference type="PANTHER" id="PTHR11776:SF7">
    <property type="entry name" value="PHOSPHORIBOSYLTRANSFERASE DOMAIN-CONTAINING PROTEIN"/>
    <property type="match status" value="1"/>
</dbReference>
<dbReference type="Pfam" id="PF00156">
    <property type="entry name" value="Pribosyltran"/>
    <property type="match status" value="1"/>
</dbReference>
<dbReference type="SUPFAM" id="SSF53271">
    <property type="entry name" value="PRTase-like"/>
    <property type="match status" value="1"/>
</dbReference>
<dbReference type="PROSITE" id="PS00103">
    <property type="entry name" value="PUR_PYR_PR_TRANSFER"/>
    <property type="match status" value="1"/>
</dbReference>
<evidence type="ECO:0000255" key="1">
    <source>
        <dbReference type="HAMAP-Rule" id="MF_00004"/>
    </source>
</evidence>
<protein>
    <recommendedName>
        <fullName evidence="1">Adenine phosphoribosyltransferase</fullName>
        <shortName evidence="1">APRT</shortName>
        <ecNumber evidence="1">2.4.2.7</ecNumber>
    </recommendedName>
</protein>
<sequence length="182" mass="19791">MIFDEFTLKSQIRAVPDFPKAGVVFRDITPLFQSPRALRMTVDSFVQRYIEADFSHIGAMDARGFLIGSAVAYALNKPLILFRKQGKLPADVLAEAYQTEYGEAFLEVHADSLCEGDSVLIFDDLIATGGTLLAAASLVRRLGARVFEAAAIIDLPELGGSTRLQDAGIATFSLTAFALDER</sequence>
<organism>
    <name type="scientific">Pseudomonas paraeruginosa (strain DSM 24068 / PA7)</name>
    <name type="common">Pseudomonas aeruginosa (strain PA7)</name>
    <dbReference type="NCBI Taxonomy" id="381754"/>
    <lineage>
        <taxon>Bacteria</taxon>
        <taxon>Pseudomonadati</taxon>
        <taxon>Pseudomonadota</taxon>
        <taxon>Gammaproteobacteria</taxon>
        <taxon>Pseudomonadales</taxon>
        <taxon>Pseudomonadaceae</taxon>
        <taxon>Pseudomonas</taxon>
        <taxon>Pseudomonas paraeruginosa</taxon>
    </lineage>
</organism>
<keyword id="KW-0963">Cytoplasm</keyword>
<keyword id="KW-0328">Glycosyltransferase</keyword>
<keyword id="KW-0660">Purine salvage</keyword>
<keyword id="KW-0808">Transferase</keyword>
<proteinExistence type="inferred from homology"/>
<gene>
    <name evidence="1" type="primary">apt</name>
    <name type="ordered locus">PSPA7_3789</name>
</gene>
<comment type="function">
    <text evidence="1">Catalyzes a salvage reaction resulting in the formation of AMP, that is energically less costly than de novo synthesis.</text>
</comment>
<comment type="catalytic activity">
    <reaction evidence="1">
        <text>AMP + diphosphate = 5-phospho-alpha-D-ribose 1-diphosphate + adenine</text>
        <dbReference type="Rhea" id="RHEA:16609"/>
        <dbReference type="ChEBI" id="CHEBI:16708"/>
        <dbReference type="ChEBI" id="CHEBI:33019"/>
        <dbReference type="ChEBI" id="CHEBI:58017"/>
        <dbReference type="ChEBI" id="CHEBI:456215"/>
        <dbReference type="EC" id="2.4.2.7"/>
    </reaction>
</comment>
<comment type="pathway">
    <text evidence="1">Purine metabolism; AMP biosynthesis via salvage pathway; AMP from adenine: step 1/1.</text>
</comment>
<comment type="subunit">
    <text evidence="1">Homodimer.</text>
</comment>
<comment type="subcellular location">
    <subcellularLocation>
        <location evidence="1">Cytoplasm</location>
    </subcellularLocation>
</comment>
<comment type="similarity">
    <text evidence="1">Belongs to the purine/pyrimidine phosphoribosyltransferase family.</text>
</comment>
<reference key="1">
    <citation type="submission" date="2007-06" db="EMBL/GenBank/DDBJ databases">
        <authorList>
            <person name="Dodson R.J."/>
            <person name="Harkins D."/>
            <person name="Paulsen I.T."/>
        </authorList>
    </citation>
    <scope>NUCLEOTIDE SEQUENCE [LARGE SCALE GENOMIC DNA]</scope>
    <source>
        <strain>DSM 24068 / PA7</strain>
    </source>
</reference>
<name>APT_PSEP7</name>
<feature type="chain" id="PRO_1000000323" description="Adenine phosphoribosyltransferase">
    <location>
        <begin position="1"/>
        <end position="182"/>
    </location>
</feature>
<accession>A6V7V8</accession>